<feature type="chain" id="PRO_1000085697" description="Probable GTP 3',8-cyclase">
    <location>
        <begin position="1"/>
        <end position="299"/>
    </location>
</feature>
<feature type="domain" description="Radical SAM core" evidence="2">
    <location>
        <begin position="4"/>
        <end position="229"/>
    </location>
</feature>
<feature type="binding site" evidence="1">
    <location>
        <position position="13"/>
    </location>
    <ligand>
        <name>GTP</name>
        <dbReference type="ChEBI" id="CHEBI:37565"/>
    </ligand>
</feature>
<feature type="binding site" evidence="1">
    <location>
        <position position="20"/>
    </location>
    <ligand>
        <name>[4Fe-4S] cluster</name>
        <dbReference type="ChEBI" id="CHEBI:49883"/>
        <label>1</label>
        <note>4Fe-4S-S-AdoMet</note>
    </ligand>
</feature>
<feature type="binding site" evidence="1">
    <location>
        <position position="24"/>
    </location>
    <ligand>
        <name>[4Fe-4S] cluster</name>
        <dbReference type="ChEBI" id="CHEBI:49883"/>
        <label>1</label>
        <note>4Fe-4S-S-AdoMet</note>
    </ligand>
</feature>
<feature type="binding site" evidence="1">
    <location>
        <position position="26"/>
    </location>
    <ligand>
        <name>S-adenosyl-L-methionine</name>
        <dbReference type="ChEBI" id="CHEBI:59789"/>
    </ligand>
</feature>
<feature type="binding site" evidence="1">
    <location>
        <position position="27"/>
    </location>
    <ligand>
        <name>[4Fe-4S] cluster</name>
        <dbReference type="ChEBI" id="CHEBI:49883"/>
        <label>1</label>
        <note>4Fe-4S-S-AdoMet</note>
    </ligand>
</feature>
<feature type="binding site" evidence="1">
    <location>
        <position position="61"/>
    </location>
    <ligand>
        <name>GTP</name>
        <dbReference type="ChEBI" id="CHEBI:37565"/>
    </ligand>
</feature>
<feature type="binding site" evidence="1">
    <location>
        <position position="65"/>
    </location>
    <ligand>
        <name>S-adenosyl-L-methionine</name>
        <dbReference type="ChEBI" id="CHEBI:59789"/>
    </ligand>
</feature>
<feature type="binding site" evidence="1">
    <location>
        <position position="94"/>
    </location>
    <ligand>
        <name>GTP</name>
        <dbReference type="ChEBI" id="CHEBI:37565"/>
    </ligand>
</feature>
<feature type="binding site" evidence="1">
    <location>
        <position position="118"/>
    </location>
    <ligand>
        <name>S-adenosyl-L-methionine</name>
        <dbReference type="ChEBI" id="CHEBI:59789"/>
    </ligand>
</feature>
<feature type="binding site" evidence="1">
    <location>
        <position position="154"/>
    </location>
    <ligand>
        <name>GTP</name>
        <dbReference type="ChEBI" id="CHEBI:37565"/>
    </ligand>
</feature>
<feature type="binding site" evidence="1">
    <location>
        <position position="245"/>
    </location>
    <ligand>
        <name>[4Fe-4S] cluster</name>
        <dbReference type="ChEBI" id="CHEBI:49883"/>
        <label>2</label>
        <note>4Fe-4S-substrate</note>
    </ligand>
</feature>
<feature type="binding site" evidence="1">
    <location>
        <position position="248"/>
    </location>
    <ligand>
        <name>[4Fe-4S] cluster</name>
        <dbReference type="ChEBI" id="CHEBI:49883"/>
        <label>2</label>
        <note>4Fe-4S-substrate</note>
    </ligand>
</feature>
<feature type="binding site" evidence="1">
    <location>
        <begin position="250"/>
        <end position="252"/>
    </location>
    <ligand>
        <name>GTP</name>
        <dbReference type="ChEBI" id="CHEBI:37565"/>
    </ligand>
</feature>
<feature type="binding site" evidence="1">
    <location>
        <position position="262"/>
    </location>
    <ligand>
        <name>[4Fe-4S] cluster</name>
        <dbReference type="ChEBI" id="CHEBI:49883"/>
        <label>2</label>
        <note>4Fe-4S-substrate</note>
    </ligand>
</feature>
<protein>
    <recommendedName>
        <fullName evidence="1">Probable GTP 3',8-cyclase</fullName>
        <ecNumber evidence="1">4.1.99.22</ecNumber>
    </recommendedName>
    <alternativeName>
        <fullName evidence="1">Molybdenum cofactor biosynthesis protein A</fullName>
    </alternativeName>
</protein>
<proteinExistence type="inferred from homology"/>
<keyword id="KW-0004">4Fe-4S</keyword>
<keyword id="KW-0342">GTP-binding</keyword>
<keyword id="KW-0408">Iron</keyword>
<keyword id="KW-0411">Iron-sulfur</keyword>
<keyword id="KW-0456">Lyase</keyword>
<keyword id="KW-0479">Metal-binding</keyword>
<keyword id="KW-0501">Molybdenum cofactor biosynthesis</keyword>
<keyword id="KW-0547">Nucleotide-binding</keyword>
<keyword id="KW-0949">S-adenosyl-L-methionine</keyword>
<dbReference type="EC" id="4.1.99.22" evidence="1"/>
<dbReference type="EMBL" id="CP000743">
    <property type="protein sequence ID" value="ABR57052.1"/>
    <property type="molecule type" value="Genomic_DNA"/>
</dbReference>
<dbReference type="RefSeq" id="WP_011974184.1">
    <property type="nucleotide sequence ID" value="NC_009635.1"/>
</dbReference>
<dbReference type="SMR" id="A6UX30"/>
<dbReference type="STRING" id="419665.Maeo_1476"/>
<dbReference type="GeneID" id="5327538"/>
<dbReference type="KEGG" id="mae:Maeo_1476"/>
<dbReference type="eggNOG" id="arCOG00930">
    <property type="taxonomic scope" value="Archaea"/>
</dbReference>
<dbReference type="HOGENOM" id="CLU_009273_0_1_2"/>
<dbReference type="OrthoDB" id="6925at2157"/>
<dbReference type="UniPathway" id="UPA00344"/>
<dbReference type="Proteomes" id="UP000001106">
    <property type="component" value="Chromosome"/>
</dbReference>
<dbReference type="GO" id="GO:0051539">
    <property type="term" value="F:4 iron, 4 sulfur cluster binding"/>
    <property type="evidence" value="ECO:0007669"/>
    <property type="project" value="UniProtKB-UniRule"/>
</dbReference>
<dbReference type="GO" id="GO:0061799">
    <property type="term" value="F:cyclic pyranopterin monophosphate synthase activity"/>
    <property type="evidence" value="ECO:0007669"/>
    <property type="project" value="TreeGrafter"/>
</dbReference>
<dbReference type="GO" id="GO:0061798">
    <property type="term" value="F:GTP 3',8'-cyclase activity"/>
    <property type="evidence" value="ECO:0007669"/>
    <property type="project" value="UniProtKB-UniRule"/>
</dbReference>
<dbReference type="GO" id="GO:0005525">
    <property type="term" value="F:GTP binding"/>
    <property type="evidence" value="ECO:0007669"/>
    <property type="project" value="UniProtKB-UniRule"/>
</dbReference>
<dbReference type="GO" id="GO:0046872">
    <property type="term" value="F:metal ion binding"/>
    <property type="evidence" value="ECO:0007669"/>
    <property type="project" value="UniProtKB-KW"/>
</dbReference>
<dbReference type="GO" id="GO:1904047">
    <property type="term" value="F:S-adenosyl-L-methionine binding"/>
    <property type="evidence" value="ECO:0007669"/>
    <property type="project" value="UniProtKB-UniRule"/>
</dbReference>
<dbReference type="GO" id="GO:0006777">
    <property type="term" value="P:Mo-molybdopterin cofactor biosynthetic process"/>
    <property type="evidence" value="ECO:0007669"/>
    <property type="project" value="UniProtKB-UniRule"/>
</dbReference>
<dbReference type="CDD" id="cd01335">
    <property type="entry name" value="Radical_SAM"/>
    <property type="match status" value="1"/>
</dbReference>
<dbReference type="Gene3D" id="3.20.20.70">
    <property type="entry name" value="Aldolase class I"/>
    <property type="match status" value="1"/>
</dbReference>
<dbReference type="HAMAP" id="MF_01225_A">
    <property type="entry name" value="MoaA_A"/>
    <property type="match status" value="1"/>
</dbReference>
<dbReference type="InterPro" id="IPR013785">
    <property type="entry name" value="Aldolase_TIM"/>
</dbReference>
<dbReference type="InterPro" id="IPR006638">
    <property type="entry name" value="Elp3/MiaA/NifB-like_rSAM"/>
</dbReference>
<dbReference type="InterPro" id="IPR013485">
    <property type="entry name" value="MoaA_arc"/>
</dbReference>
<dbReference type="InterPro" id="IPR000385">
    <property type="entry name" value="MoaA_NifB_PqqE_Fe-S-bd_CS"/>
</dbReference>
<dbReference type="InterPro" id="IPR010505">
    <property type="entry name" value="MoaA_twitch"/>
</dbReference>
<dbReference type="InterPro" id="IPR050105">
    <property type="entry name" value="MoCo_biosynth_MoaA/MoaC"/>
</dbReference>
<dbReference type="InterPro" id="IPR007197">
    <property type="entry name" value="rSAM"/>
</dbReference>
<dbReference type="NCBIfam" id="TIGR02668">
    <property type="entry name" value="moaA_archaeal"/>
    <property type="match status" value="1"/>
</dbReference>
<dbReference type="NCBIfam" id="NF001199">
    <property type="entry name" value="PRK00164.2-1"/>
    <property type="match status" value="1"/>
</dbReference>
<dbReference type="PANTHER" id="PTHR22960:SF0">
    <property type="entry name" value="MOLYBDENUM COFACTOR BIOSYNTHESIS PROTEIN 1"/>
    <property type="match status" value="1"/>
</dbReference>
<dbReference type="PANTHER" id="PTHR22960">
    <property type="entry name" value="MOLYBDOPTERIN COFACTOR SYNTHESIS PROTEIN A"/>
    <property type="match status" value="1"/>
</dbReference>
<dbReference type="Pfam" id="PF13353">
    <property type="entry name" value="Fer4_12"/>
    <property type="match status" value="1"/>
</dbReference>
<dbReference type="Pfam" id="PF06463">
    <property type="entry name" value="Mob_synth_C"/>
    <property type="match status" value="1"/>
</dbReference>
<dbReference type="Pfam" id="PF04055">
    <property type="entry name" value="Radical_SAM"/>
    <property type="match status" value="1"/>
</dbReference>
<dbReference type="SFLD" id="SFLDG01383">
    <property type="entry name" value="cyclic_pyranopterin_phosphate"/>
    <property type="match status" value="1"/>
</dbReference>
<dbReference type="SFLD" id="SFLDS00029">
    <property type="entry name" value="Radical_SAM"/>
    <property type="match status" value="1"/>
</dbReference>
<dbReference type="SMART" id="SM00729">
    <property type="entry name" value="Elp3"/>
    <property type="match status" value="1"/>
</dbReference>
<dbReference type="SUPFAM" id="SSF102114">
    <property type="entry name" value="Radical SAM enzymes"/>
    <property type="match status" value="1"/>
</dbReference>
<dbReference type="PROSITE" id="PS01305">
    <property type="entry name" value="MOAA_NIFB_PQQE"/>
    <property type="match status" value="1"/>
</dbReference>
<dbReference type="PROSITE" id="PS51918">
    <property type="entry name" value="RADICAL_SAM"/>
    <property type="match status" value="1"/>
</dbReference>
<sequence length="299" mass="34664">MKDLHNREIKSLRISITPQCNLNCFYCHKEGHNIDNNKLMTPTEIGEMVKYSLKYGINKIKISGGEPLLRNDLPEIIRNIKNLKNNQIKDISLTTNGILLEKYAQKLKDAGLDRVNVSLDTLDPELYKKITGGNVELVKRGIEKAVEAGLKPIKINFVVMSNTVGGLNDIMDYCRKMGVILQIIEFMPVDEKLKKYHYDINKIEEEISKKSDKTMVRKFMQNRKKYLVDGLEIEFVRPMDNTEFCSHCTRIRLTYDGLLKPCLLRDDNLVDVLTPLRNGEDINKCFIKCIDRRELYFKE</sequence>
<gene>
    <name evidence="1" type="primary">moaA</name>
    <name type="ordered locus">Maeo_1476</name>
</gene>
<accession>A6UX30</accession>
<reference key="1">
    <citation type="submission" date="2007-06" db="EMBL/GenBank/DDBJ databases">
        <title>Complete sequence of Methanococcus aeolicus Nankai-3.</title>
        <authorList>
            <consortium name="US DOE Joint Genome Institute"/>
            <person name="Copeland A."/>
            <person name="Lucas S."/>
            <person name="Lapidus A."/>
            <person name="Barry K."/>
            <person name="Glavina del Rio T."/>
            <person name="Dalin E."/>
            <person name="Tice H."/>
            <person name="Pitluck S."/>
            <person name="Chain P."/>
            <person name="Malfatti S."/>
            <person name="Shin M."/>
            <person name="Vergez L."/>
            <person name="Schmutz J."/>
            <person name="Larimer F."/>
            <person name="Land M."/>
            <person name="Hauser L."/>
            <person name="Kyrpides N."/>
            <person name="Lykidis A."/>
            <person name="Sieprawska-Lupa M."/>
            <person name="Whitman W.B."/>
            <person name="Richardson P."/>
        </authorList>
    </citation>
    <scope>NUCLEOTIDE SEQUENCE [LARGE SCALE GENOMIC DNA]</scope>
    <source>
        <strain>ATCC BAA-1280 / DSM 17508 / OCM 812 / Nankai-3</strain>
    </source>
</reference>
<evidence type="ECO:0000255" key="1">
    <source>
        <dbReference type="HAMAP-Rule" id="MF_01225"/>
    </source>
</evidence>
<evidence type="ECO:0000255" key="2">
    <source>
        <dbReference type="PROSITE-ProRule" id="PRU01266"/>
    </source>
</evidence>
<organism>
    <name type="scientific">Methanococcus aeolicus (strain ATCC BAA-1280 / DSM 17508 / OCM 812 / Nankai-3)</name>
    <dbReference type="NCBI Taxonomy" id="419665"/>
    <lineage>
        <taxon>Archaea</taxon>
        <taxon>Methanobacteriati</taxon>
        <taxon>Methanobacteriota</taxon>
        <taxon>Methanomada group</taxon>
        <taxon>Methanococci</taxon>
        <taxon>Methanococcales</taxon>
        <taxon>Methanococcaceae</taxon>
        <taxon>Methanococcus</taxon>
    </lineage>
</organism>
<comment type="function">
    <text evidence="1">Catalyzes the cyclization of GTP to (8S)-3',8-cyclo-7,8-dihydroguanosine 5'-triphosphate.</text>
</comment>
<comment type="catalytic activity">
    <reaction evidence="1">
        <text>GTP + AH2 + S-adenosyl-L-methionine = (8S)-3',8-cyclo-7,8-dihydroguanosine 5'-triphosphate + 5'-deoxyadenosine + L-methionine + A + H(+)</text>
        <dbReference type="Rhea" id="RHEA:49576"/>
        <dbReference type="ChEBI" id="CHEBI:13193"/>
        <dbReference type="ChEBI" id="CHEBI:15378"/>
        <dbReference type="ChEBI" id="CHEBI:17319"/>
        <dbReference type="ChEBI" id="CHEBI:17499"/>
        <dbReference type="ChEBI" id="CHEBI:37565"/>
        <dbReference type="ChEBI" id="CHEBI:57844"/>
        <dbReference type="ChEBI" id="CHEBI:59789"/>
        <dbReference type="ChEBI" id="CHEBI:131766"/>
        <dbReference type="EC" id="4.1.99.22"/>
    </reaction>
</comment>
<comment type="cofactor">
    <cofactor evidence="1">
        <name>[4Fe-4S] cluster</name>
        <dbReference type="ChEBI" id="CHEBI:49883"/>
    </cofactor>
    <text evidence="1">Binds 2 [4Fe-4S] clusters. Binds 1 [4Fe-4S] cluster coordinated with 3 cysteines and an exchangeable S-adenosyl-L-methionine and 1 [4Fe-4S] cluster coordinated with 3 cysteines and the GTP-derived substrate.</text>
</comment>
<comment type="pathway">
    <text evidence="1">Cofactor biosynthesis; molybdopterin biosynthesis.</text>
</comment>
<comment type="similarity">
    <text evidence="1">Belongs to the radical SAM superfamily. MoaA family.</text>
</comment>
<name>MOAA_META3</name>